<accession>P25448</accession>
<proteinExistence type="inferred from homology"/>
<reference key="1">
    <citation type="journal article" date="1990" name="Mol. Microbiol.">
        <title>Structure, localization and function of FanF, a minor component of K99 fibrillae of enterotoxigenic Escherichia coli.</title>
        <authorList>
            <person name="Simons B.L."/>
            <person name="Willemsen P.T.J."/>
            <person name="Bakker D."/>
            <person name="Roosendaal B."/>
            <person name="de Graaf F.K."/>
            <person name="Oudega B."/>
        </authorList>
    </citation>
    <scope>NUCLEOTIDE SEQUENCE [GENOMIC DNA]</scope>
</reference>
<reference key="2">
    <citation type="journal article" date="1993" name="Jpn. J. Vet. Res.">
        <title>Confirmed nucleotide sequence of fanF of Escherichia coli K99 fimbriae.</title>
        <authorList>
            <person name="Abe N."/>
            <person name="Moriishi K."/>
            <person name="Saito M."/>
            <person name="Naiki M."/>
        </authorList>
    </citation>
    <scope>NUCLEOTIDE SEQUENCE [GENOMIC DNA]</scope>
</reference>
<reference key="3">
    <citation type="journal article" date="1991" name="Mol. Microbiol.">
        <title>Structure and function of periplasmic chaperone-like proteins involved in the biosynthesis of K88 and K99 fimbriae in enterotoxigenic Escherichia coli.</title>
        <authorList>
            <person name="Bakker D."/>
            <person name="Vader C.E.M."/>
            <person name="Roosendaal B."/>
            <person name="Mooi F.R."/>
            <person name="Oudega B."/>
            <person name="de Graaf F.K."/>
        </authorList>
    </citation>
    <scope>NUCLEOTIDE SEQUENCE [GENOMIC DNA] OF 1-13</scope>
</reference>
<protein>
    <recommendedName>
        <fullName>Protein FanF</fullName>
    </recommendedName>
</protein>
<gene>
    <name type="primary">fanF</name>
</gene>
<organism>
    <name type="scientific">Escherichia coli</name>
    <dbReference type="NCBI Taxonomy" id="562"/>
    <lineage>
        <taxon>Bacteria</taxon>
        <taxon>Pseudomonadati</taxon>
        <taxon>Pseudomonadota</taxon>
        <taxon>Gammaproteobacteria</taxon>
        <taxon>Enterobacterales</taxon>
        <taxon>Enterobacteriaceae</taxon>
        <taxon>Escherichia</taxon>
    </lineage>
</organism>
<feature type="signal peptide" evidence="1">
    <location>
        <begin position="1"/>
        <end position="22"/>
    </location>
</feature>
<feature type="chain" id="PRO_0000009204" description="Protein FanF">
    <location>
        <begin position="23"/>
        <end position="333"/>
    </location>
</feature>
<geneLocation type="plasmid">
    <name>pFK99</name>
</geneLocation>
<comment type="function">
    <text>Minor component of K99 fimbriae. Is not required for binding of K99 fimbriae to the ganglioside receptor. May play a role in initiation, elongation and flexibility of the fimbriae.</text>
</comment>
<comment type="subcellular location">
    <subcellularLocation>
        <location>Fimbrium</location>
    </subcellularLocation>
    <text>At the tip and in or along the sides of the K99 fimbriae.</text>
</comment>
<comment type="PTM">
    <text evidence="2">Three disulfide bonds are present.</text>
</comment>
<comment type="miscellaneous">
    <text>Requires the FanE protein for its stability.</text>
</comment>
<sequence length="333" mass="36484">MKNKYNLLFFLFLLCYGDVALAACTGKLKISPGYSGHTYSFDSSIPNNSNIARYLVEISEKIVCDADQSGWDGKRYAQLHLYSSGALCESVSGDGITFRSNVSGLSWRFPNGIPYHCAAGQINLGGIKYADRNGKVTWNPGELRHEIFLRVDNRFDFSKSRTFSVNTISGRGGLGGDSSVVIPLIGSSFNYSYSNIATCTLTGPSEVNFNTVTTSDVLKGTTHRDLNLRAECRNRGASLGLNFKFEPQYKDVSANKQGVFYAKNTSGSLTYKLTKKADASAIPLNEFVKLIVEDKVNIHTGNTIPLLLTLQKGDGKIATGKIETFLNVTMEHM</sequence>
<evidence type="ECO:0000255" key="1"/>
<evidence type="ECO:0000305" key="2"/>
<dbReference type="EMBL" id="X56001">
    <property type="protein sequence ID" value="CAA39475.1"/>
    <property type="molecule type" value="Genomic_DNA"/>
</dbReference>
<dbReference type="EMBL" id="S70131">
    <property type="protein sequence ID" value="AAB30306.1"/>
    <property type="molecule type" value="Genomic_DNA"/>
</dbReference>
<dbReference type="PIR" id="S12392">
    <property type="entry name" value="S12392"/>
</dbReference>
<dbReference type="RefSeq" id="WP_000792596.1">
    <property type="nucleotide sequence ID" value="NZ_NLNM01000061.1"/>
</dbReference>
<dbReference type="GO" id="GO:0009289">
    <property type="term" value="C:pilus"/>
    <property type="evidence" value="ECO:0007669"/>
    <property type="project" value="UniProtKB-SubCell"/>
</dbReference>
<dbReference type="InterPro" id="IPR008966">
    <property type="entry name" value="Adhesion_dom_sf"/>
</dbReference>
<dbReference type="SUPFAM" id="SSF49401">
    <property type="entry name" value="Bacterial adhesins"/>
    <property type="match status" value="1"/>
</dbReference>
<name>FANF_ECOLX</name>
<keyword id="KW-1015">Disulfide bond</keyword>
<keyword id="KW-0281">Fimbrium</keyword>
<keyword id="KW-0614">Plasmid</keyword>
<keyword id="KW-0732">Signal</keyword>